<protein>
    <recommendedName>
        <fullName evidence="1">Potassium-transporting ATPase KdpC subunit</fullName>
    </recommendedName>
    <alternativeName>
        <fullName evidence="1">ATP phosphohydrolase [potassium-transporting] C chain</fullName>
    </alternativeName>
    <alternativeName>
        <fullName evidence="1">Potassium-binding and translocating subunit C</fullName>
    </alternativeName>
    <alternativeName>
        <fullName evidence="1">Potassium-translocating ATPase C chain</fullName>
    </alternativeName>
</protein>
<reference key="1">
    <citation type="submission" date="2007-11" db="EMBL/GenBank/DDBJ databases">
        <authorList>
            <consortium name="The Salmonella enterica serovar Paratyphi B Genome Sequencing Project"/>
            <person name="McClelland M."/>
            <person name="Sanderson E.K."/>
            <person name="Porwollik S."/>
            <person name="Spieth J."/>
            <person name="Clifton W.S."/>
            <person name="Fulton R."/>
            <person name="Cordes M."/>
            <person name="Wollam A."/>
            <person name="Shah N."/>
            <person name="Pepin K."/>
            <person name="Bhonagiri V."/>
            <person name="Nash W."/>
            <person name="Johnson M."/>
            <person name="Thiruvilangam P."/>
            <person name="Wilson R."/>
        </authorList>
    </citation>
    <scope>NUCLEOTIDE SEQUENCE [LARGE SCALE GENOMIC DNA]</scope>
    <source>
        <strain>ATCC BAA-1250 / SPB7</strain>
    </source>
</reference>
<gene>
    <name evidence="1" type="primary">kdpC</name>
    <name type="ordered locus">SPAB_02832</name>
</gene>
<feature type="chain" id="PRO_1000078801" description="Potassium-transporting ATPase KdpC subunit">
    <location>
        <begin position="1"/>
        <end position="194"/>
    </location>
</feature>
<feature type="transmembrane region" description="Helical" evidence="1">
    <location>
        <begin position="12"/>
        <end position="34"/>
    </location>
</feature>
<organism>
    <name type="scientific">Salmonella paratyphi B (strain ATCC BAA-1250 / SPB7)</name>
    <dbReference type="NCBI Taxonomy" id="1016998"/>
    <lineage>
        <taxon>Bacteria</taxon>
        <taxon>Pseudomonadati</taxon>
        <taxon>Pseudomonadota</taxon>
        <taxon>Gammaproteobacteria</taxon>
        <taxon>Enterobacterales</taxon>
        <taxon>Enterobacteriaceae</taxon>
        <taxon>Salmonella</taxon>
    </lineage>
</organism>
<sequence>MIGLRPAFSTMLFLLLLTGGVYPLLTTALGQWWFPWQANGSLIHKDNVIRGSALIGQSFTAAGYFHGRPSATADTPYNPLASGGSNLAASNPELDAQIQARVAALRAANPQASSAVPVELATASASGLDNNLTPGAAAWQIPRVAAARQLPVEQVAQLVAEYTHRPLARFLGQPVVNIVELNLALDALQGHRAK</sequence>
<accession>A9MUE1</accession>
<name>KDPC_SALPB</name>
<evidence type="ECO:0000255" key="1">
    <source>
        <dbReference type="HAMAP-Rule" id="MF_00276"/>
    </source>
</evidence>
<keyword id="KW-0067">ATP-binding</keyword>
<keyword id="KW-0997">Cell inner membrane</keyword>
<keyword id="KW-1003">Cell membrane</keyword>
<keyword id="KW-0406">Ion transport</keyword>
<keyword id="KW-0472">Membrane</keyword>
<keyword id="KW-0547">Nucleotide-binding</keyword>
<keyword id="KW-0630">Potassium</keyword>
<keyword id="KW-0633">Potassium transport</keyword>
<keyword id="KW-0812">Transmembrane</keyword>
<keyword id="KW-1133">Transmembrane helix</keyword>
<keyword id="KW-0813">Transport</keyword>
<dbReference type="EMBL" id="CP000886">
    <property type="protein sequence ID" value="ABX68204.1"/>
    <property type="molecule type" value="Genomic_DNA"/>
</dbReference>
<dbReference type="RefSeq" id="WP_000579804.1">
    <property type="nucleotide sequence ID" value="NC_010102.1"/>
</dbReference>
<dbReference type="SMR" id="A9MUE1"/>
<dbReference type="KEGG" id="spq:SPAB_02832"/>
<dbReference type="PATRIC" id="fig|1016998.12.peg.2677"/>
<dbReference type="HOGENOM" id="CLU_077094_2_0_6"/>
<dbReference type="BioCyc" id="SENT1016998:SPAB_RS11535-MONOMER"/>
<dbReference type="Proteomes" id="UP000008556">
    <property type="component" value="Chromosome"/>
</dbReference>
<dbReference type="GO" id="GO:0005886">
    <property type="term" value="C:plasma membrane"/>
    <property type="evidence" value="ECO:0007669"/>
    <property type="project" value="UniProtKB-SubCell"/>
</dbReference>
<dbReference type="GO" id="GO:0005524">
    <property type="term" value="F:ATP binding"/>
    <property type="evidence" value="ECO:0007669"/>
    <property type="project" value="UniProtKB-UniRule"/>
</dbReference>
<dbReference type="GO" id="GO:0008556">
    <property type="term" value="F:P-type potassium transmembrane transporter activity"/>
    <property type="evidence" value="ECO:0007669"/>
    <property type="project" value="InterPro"/>
</dbReference>
<dbReference type="HAMAP" id="MF_00276">
    <property type="entry name" value="KdpC"/>
    <property type="match status" value="1"/>
</dbReference>
<dbReference type="InterPro" id="IPR003820">
    <property type="entry name" value="KdpC"/>
</dbReference>
<dbReference type="NCBIfam" id="TIGR00681">
    <property type="entry name" value="kdpC"/>
    <property type="match status" value="1"/>
</dbReference>
<dbReference type="NCBIfam" id="NF001454">
    <property type="entry name" value="PRK00315.1"/>
    <property type="match status" value="1"/>
</dbReference>
<dbReference type="PANTHER" id="PTHR30042">
    <property type="entry name" value="POTASSIUM-TRANSPORTING ATPASE C CHAIN"/>
    <property type="match status" value="1"/>
</dbReference>
<dbReference type="PANTHER" id="PTHR30042:SF2">
    <property type="entry name" value="POTASSIUM-TRANSPORTING ATPASE KDPC SUBUNIT"/>
    <property type="match status" value="1"/>
</dbReference>
<dbReference type="Pfam" id="PF02669">
    <property type="entry name" value="KdpC"/>
    <property type="match status" value="1"/>
</dbReference>
<dbReference type="PIRSF" id="PIRSF001296">
    <property type="entry name" value="K_ATPase_KdpC"/>
    <property type="match status" value="1"/>
</dbReference>
<comment type="function">
    <text evidence="1">Part of the high-affinity ATP-driven potassium transport (or Kdp) system, which catalyzes the hydrolysis of ATP coupled with the electrogenic transport of potassium into the cytoplasm. This subunit acts as a catalytic chaperone that increases the ATP-binding affinity of the ATP-hydrolyzing subunit KdpB by the formation of a transient KdpB/KdpC/ATP ternary complex.</text>
</comment>
<comment type="subunit">
    <text evidence="1">The system is composed of three essential subunits: KdpA, KdpB and KdpC.</text>
</comment>
<comment type="subcellular location">
    <subcellularLocation>
        <location evidence="1">Cell inner membrane</location>
        <topology evidence="1">Single-pass membrane protein</topology>
    </subcellularLocation>
</comment>
<comment type="similarity">
    <text evidence="1">Belongs to the KdpC family.</text>
</comment>
<proteinExistence type="inferred from homology"/>